<feature type="chain" id="PRO_1000214893" description="Large ribosomal subunit protein bL21">
    <location>
        <begin position="1"/>
        <end position="102"/>
    </location>
</feature>
<evidence type="ECO:0000255" key="1">
    <source>
        <dbReference type="HAMAP-Rule" id="MF_01363"/>
    </source>
</evidence>
<evidence type="ECO:0000305" key="2"/>
<dbReference type="EMBL" id="CP001638">
    <property type="protein sequence ID" value="ACS25237.1"/>
    <property type="molecule type" value="Genomic_DNA"/>
</dbReference>
<dbReference type="SMR" id="C5D5G9"/>
<dbReference type="STRING" id="471223.GWCH70_2542"/>
<dbReference type="KEGG" id="gwc:GWCH70_2542"/>
<dbReference type="eggNOG" id="COG0261">
    <property type="taxonomic scope" value="Bacteria"/>
</dbReference>
<dbReference type="HOGENOM" id="CLU_061463_3_2_9"/>
<dbReference type="OrthoDB" id="9813334at2"/>
<dbReference type="GO" id="GO:0005737">
    <property type="term" value="C:cytoplasm"/>
    <property type="evidence" value="ECO:0007669"/>
    <property type="project" value="UniProtKB-ARBA"/>
</dbReference>
<dbReference type="GO" id="GO:1990904">
    <property type="term" value="C:ribonucleoprotein complex"/>
    <property type="evidence" value="ECO:0007669"/>
    <property type="project" value="UniProtKB-KW"/>
</dbReference>
<dbReference type="GO" id="GO:0005840">
    <property type="term" value="C:ribosome"/>
    <property type="evidence" value="ECO:0007669"/>
    <property type="project" value="UniProtKB-KW"/>
</dbReference>
<dbReference type="GO" id="GO:0019843">
    <property type="term" value="F:rRNA binding"/>
    <property type="evidence" value="ECO:0007669"/>
    <property type="project" value="UniProtKB-UniRule"/>
</dbReference>
<dbReference type="GO" id="GO:0003735">
    <property type="term" value="F:structural constituent of ribosome"/>
    <property type="evidence" value="ECO:0007669"/>
    <property type="project" value="InterPro"/>
</dbReference>
<dbReference type="GO" id="GO:0006412">
    <property type="term" value="P:translation"/>
    <property type="evidence" value="ECO:0007669"/>
    <property type="project" value="UniProtKB-UniRule"/>
</dbReference>
<dbReference type="HAMAP" id="MF_01363">
    <property type="entry name" value="Ribosomal_bL21"/>
    <property type="match status" value="1"/>
</dbReference>
<dbReference type="InterPro" id="IPR028909">
    <property type="entry name" value="bL21-like"/>
</dbReference>
<dbReference type="InterPro" id="IPR036164">
    <property type="entry name" value="bL21-like_sf"/>
</dbReference>
<dbReference type="InterPro" id="IPR001787">
    <property type="entry name" value="Ribosomal_bL21"/>
</dbReference>
<dbReference type="InterPro" id="IPR018258">
    <property type="entry name" value="Ribosomal_bL21_CS"/>
</dbReference>
<dbReference type="NCBIfam" id="TIGR00061">
    <property type="entry name" value="L21"/>
    <property type="match status" value="1"/>
</dbReference>
<dbReference type="PANTHER" id="PTHR21349">
    <property type="entry name" value="50S RIBOSOMAL PROTEIN L21"/>
    <property type="match status" value="1"/>
</dbReference>
<dbReference type="PANTHER" id="PTHR21349:SF0">
    <property type="entry name" value="LARGE RIBOSOMAL SUBUNIT PROTEIN BL21M"/>
    <property type="match status" value="1"/>
</dbReference>
<dbReference type="Pfam" id="PF00829">
    <property type="entry name" value="Ribosomal_L21p"/>
    <property type="match status" value="1"/>
</dbReference>
<dbReference type="SUPFAM" id="SSF141091">
    <property type="entry name" value="L21p-like"/>
    <property type="match status" value="1"/>
</dbReference>
<dbReference type="PROSITE" id="PS01169">
    <property type="entry name" value="RIBOSOMAL_L21"/>
    <property type="match status" value="1"/>
</dbReference>
<sequence>MYAIIETGGKQIKVEEGQEIYIEKIDAQEGETVTFDKVLFVGGETVKIGNPTVEGATVTAKVQKHGRQKKIIVFKYKAKKNYRRKQGHRQPYTKVVIEKINA</sequence>
<gene>
    <name evidence="1" type="primary">rplU</name>
    <name type="ordered locus">GWCH70_2542</name>
</gene>
<proteinExistence type="inferred from homology"/>
<name>RL21_GEOSW</name>
<reference key="1">
    <citation type="submission" date="2009-06" db="EMBL/GenBank/DDBJ databases">
        <title>Complete sequence of chromosome of Geopacillus sp. WCH70.</title>
        <authorList>
            <consortium name="US DOE Joint Genome Institute"/>
            <person name="Lucas S."/>
            <person name="Copeland A."/>
            <person name="Lapidus A."/>
            <person name="Glavina del Rio T."/>
            <person name="Dalin E."/>
            <person name="Tice H."/>
            <person name="Bruce D."/>
            <person name="Goodwin L."/>
            <person name="Pitluck S."/>
            <person name="Chertkov O."/>
            <person name="Brettin T."/>
            <person name="Detter J.C."/>
            <person name="Han C."/>
            <person name="Larimer F."/>
            <person name="Land M."/>
            <person name="Hauser L."/>
            <person name="Kyrpides N."/>
            <person name="Mikhailova N."/>
            <person name="Brumm P."/>
            <person name="Mead D.A."/>
            <person name="Richardson P."/>
        </authorList>
    </citation>
    <scope>NUCLEOTIDE SEQUENCE [LARGE SCALE GENOMIC DNA]</scope>
    <source>
        <strain>WCH70</strain>
    </source>
</reference>
<keyword id="KW-0687">Ribonucleoprotein</keyword>
<keyword id="KW-0689">Ribosomal protein</keyword>
<keyword id="KW-0694">RNA-binding</keyword>
<keyword id="KW-0699">rRNA-binding</keyword>
<organism>
    <name type="scientific">Geobacillus sp. (strain WCH70)</name>
    <dbReference type="NCBI Taxonomy" id="471223"/>
    <lineage>
        <taxon>Bacteria</taxon>
        <taxon>Bacillati</taxon>
        <taxon>Bacillota</taxon>
        <taxon>Bacilli</taxon>
        <taxon>Bacillales</taxon>
        <taxon>Anoxybacillaceae</taxon>
        <taxon>Geobacillus</taxon>
    </lineage>
</organism>
<protein>
    <recommendedName>
        <fullName evidence="1">Large ribosomal subunit protein bL21</fullName>
    </recommendedName>
    <alternativeName>
        <fullName evidence="2">50S ribosomal protein L21</fullName>
    </alternativeName>
</protein>
<accession>C5D5G9</accession>
<comment type="function">
    <text evidence="1">This protein binds to 23S rRNA in the presence of protein L20.</text>
</comment>
<comment type="subunit">
    <text evidence="1">Part of the 50S ribosomal subunit. Contacts protein L20.</text>
</comment>
<comment type="similarity">
    <text evidence="1">Belongs to the bacterial ribosomal protein bL21 family.</text>
</comment>